<evidence type="ECO:0000250" key="1">
    <source>
        <dbReference type="UniProtKB" id="E9RBR0"/>
    </source>
</evidence>
<evidence type="ECO:0000250" key="2">
    <source>
        <dbReference type="UniProtKB" id="Q70KY3"/>
    </source>
</evidence>
<evidence type="ECO:0000255" key="3"/>
<evidence type="ECO:0000255" key="4">
    <source>
        <dbReference type="PROSITE-ProRule" id="PRU00498"/>
    </source>
</evidence>
<evidence type="ECO:0000269" key="5">
    <source>
    </source>
</evidence>
<evidence type="ECO:0000269" key="6">
    <source>
    </source>
</evidence>
<evidence type="ECO:0000303" key="7">
    <source>
    </source>
</evidence>
<evidence type="ECO:0000303" key="8">
    <source>
    </source>
</evidence>
<evidence type="ECO:0000305" key="9"/>
<evidence type="ECO:0000305" key="10">
    <source>
    </source>
</evidence>
<evidence type="ECO:0000305" key="11">
    <source>
    </source>
</evidence>
<comment type="function">
    <text evidence="5 6 11">Laccase; part of the Pks1 gene cluster that mediates the biosynthesis of an anthraquinone derivative pigment that contributes to conidial pigmentation that provides protection from UV radiation, heat and cold stress (PubMed:29958281). The polyketide synthase Pks1 produces 1-acetyl-2,4,6,8-tetrahydroxy-9,10-anthraquinone though condensation of acetyl-CoA with malonyl-CoA (Probable). The dehydratase EthD and the laccase Mlac1 further convert the anthraquinone derivative into the final conidial pigment (Probable) (PubMed:20382249).</text>
</comment>
<comment type="cofactor">
    <cofactor evidence="2">
        <name>Cu cation</name>
        <dbReference type="ChEBI" id="CHEBI:23378"/>
    </cofactor>
    <text evidence="2">Binds 4 Cu cations per monomer.</text>
</comment>
<comment type="pathway">
    <text evidence="5">Pigment biosynthesis.</text>
</comment>
<comment type="subcellular location">
    <subcellularLocation>
        <location evidence="1">Cell surface</location>
    </subcellularLocation>
</comment>
<comment type="induction">
    <text evidence="5">Expressed during isotropic growth (swelling) but not during polarized growth (germ tubes and hyphae) (PubMed:20382249). Expressed exclusively in the later stages of conidiation and in blastospores when M.anisopliae is living as a saprophyte (PubMed:20382249). During infection processes, is also expressed by appressoria on the cuticle surface and hyphal bodies inside the insect haemocoel (PubMed:20382249).</text>
</comment>
<comment type="disruption phenotype">
    <text evidence="5">Reduces virulence to caterpillars because of impaired appressoria and delayed post-infection events (PubMed:20382249). Produces a yellow-conidia phenotype with increased conidial susceptibility to heat shock and UV-B stress (PubMed:20382249).</text>
</comment>
<comment type="similarity">
    <text evidence="9">Belongs to the multicopper oxidase family.</text>
</comment>
<sequence>MSRFARLLLIVALFFTNAWAKTVKETLRITWKEGAPNGQARELIYTNGQFPSPTLVWDEDDDIEGQRPIQPGNKFVYRFKASPPGNHWYHSHEKMSLVDGLYGAIHIRLTGTPRRFHMNDAKSQARRPKGDRTGLWSQISQDKDDIKAMENAAYDPEYLVVSDWSQYTSEEYWKISTDSGLLVLYAYVAPSILVNGKGEVYCPGQKFLQAELAPGLVEDAFPPGTEVSDKGCFPADLDQVQGGPWNITKRPDLIPPRVREGCVASRHENATIVVDPSKNNGWVSMHFVAAATTAQITFSVDSHEFWLYEIDGNYVNPRKFASAVMSAGETFSVMIKLDQEPGKYTMRIPNSGASQVLGGFAEMVYKGCEREEKAGKAYLSYGGNPTSPDVEKNSFFPWQLDTDHMSPWPPNKPRPGNADEEHLLVLGRVGAPYNYTMNTKYLYPVDFQNDDPLLFYPSATRDTENDGLVLRTKNGSWVDLILQVSTLPGDTASSEHFMHKHGSKTWRIGFGTGVWNYTSVEEAIQERPQDFNLETPGLRDTWITAFSIGGEAYWSVFRYFVDNPGPWLFHCHIELHLMGGMGIAILDGVDAWPEHIPEEYQLR</sequence>
<accession>C3SAH7</accession>
<organism>
    <name type="scientific">Metarhizium anisopliae</name>
    <name type="common">Entomophthora anisopliae</name>
    <dbReference type="NCBI Taxonomy" id="5530"/>
    <lineage>
        <taxon>Eukaryota</taxon>
        <taxon>Fungi</taxon>
        <taxon>Dikarya</taxon>
        <taxon>Ascomycota</taxon>
        <taxon>Pezizomycotina</taxon>
        <taxon>Sordariomycetes</taxon>
        <taxon>Hypocreomycetidae</taxon>
        <taxon>Hypocreales</taxon>
        <taxon>Clavicipitaceae</taxon>
        <taxon>Metarhizium</taxon>
    </lineage>
</organism>
<protein>
    <recommendedName>
        <fullName evidence="7">Laccase 1</fullName>
        <ecNumber evidence="10">1.10.3.-</ecNumber>
    </recommendedName>
    <alternativeName>
        <fullName evidence="7">Conidial pigment biosynthesis oxidase Mlac1</fullName>
    </alternativeName>
</protein>
<keyword id="KW-0186">Copper</keyword>
<keyword id="KW-0325">Glycoprotein</keyword>
<keyword id="KW-0479">Metal-binding</keyword>
<keyword id="KW-0560">Oxidoreductase</keyword>
<keyword id="KW-0677">Repeat</keyword>
<keyword id="KW-0732">Signal</keyword>
<dbReference type="EC" id="1.10.3.-" evidence="10"/>
<dbReference type="EMBL" id="EU769126">
    <property type="protein sequence ID" value="ACQ65735.1"/>
    <property type="molecule type" value="Genomic_DNA"/>
</dbReference>
<dbReference type="SMR" id="C3SAH7"/>
<dbReference type="GlyCosmos" id="C3SAH7">
    <property type="glycosylation" value="5 sites, No reported glycans"/>
</dbReference>
<dbReference type="VEuPathDB" id="FungiDB:MAN_10477"/>
<dbReference type="GO" id="GO:0009986">
    <property type="term" value="C:cell surface"/>
    <property type="evidence" value="ECO:0007669"/>
    <property type="project" value="UniProtKB-SubCell"/>
</dbReference>
<dbReference type="GO" id="GO:0005507">
    <property type="term" value="F:copper ion binding"/>
    <property type="evidence" value="ECO:0007669"/>
    <property type="project" value="InterPro"/>
</dbReference>
<dbReference type="GO" id="GO:0016491">
    <property type="term" value="F:oxidoreductase activity"/>
    <property type="evidence" value="ECO:0007669"/>
    <property type="project" value="UniProtKB-KW"/>
</dbReference>
<dbReference type="CDD" id="cd13876">
    <property type="entry name" value="CuRO_2_Abr2_like"/>
    <property type="match status" value="1"/>
</dbReference>
<dbReference type="CDD" id="cd13898">
    <property type="entry name" value="CuRO_3_Abr2_like"/>
    <property type="match status" value="1"/>
</dbReference>
<dbReference type="Gene3D" id="2.60.40.420">
    <property type="entry name" value="Cupredoxins - blue copper proteins"/>
    <property type="match status" value="3"/>
</dbReference>
<dbReference type="InterPro" id="IPR011707">
    <property type="entry name" value="Cu-oxidase-like_N"/>
</dbReference>
<dbReference type="InterPro" id="IPR001117">
    <property type="entry name" value="Cu-oxidase_2nd"/>
</dbReference>
<dbReference type="InterPro" id="IPR011706">
    <property type="entry name" value="Cu-oxidase_C"/>
</dbReference>
<dbReference type="InterPro" id="IPR045087">
    <property type="entry name" value="Cu-oxidase_fam"/>
</dbReference>
<dbReference type="InterPro" id="IPR033138">
    <property type="entry name" value="Cu_oxidase_CS"/>
</dbReference>
<dbReference type="InterPro" id="IPR002355">
    <property type="entry name" value="Cu_oxidase_Cu_BS"/>
</dbReference>
<dbReference type="InterPro" id="IPR008972">
    <property type="entry name" value="Cupredoxin"/>
</dbReference>
<dbReference type="PANTHER" id="PTHR11709:SF488">
    <property type="entry name" value="LACCASE-RELATED"/>
    <property type="match status" value="1"/>
</dbReference>
<dbReference type="PANTHER" id="PTHR11709">
    <property type="entry name" value="MULTI-COPPER OXIDASE"/>
    <property type="match status" value="1"/>
</dbReference>
<dbReference type="Pfam" id="PF00394">
    <property type="entry name" value="Cu-oxidase"/>
    <property type="match status" value="1"/>
</dbReference>
<dbReference type="Pfam" id="PF07731">
    <property type="entry name" value="Cu-oxidase_2"/>
    <property type="match status" value="1"/>
</dbReference>
<dbReference type="Pfam" id="PF07732">
    <property type="entry name" value="Cu-oxidase_3"/>
    <property type="match status" value="1"/>
</dbReference>
<dbReference type="SUPFAM" id="SSF49503">
    <property type="entry name" value="Cupredoxins"/>
    <property type="match status" value="3"/>
</dbReference>
<dbReference type="PROSITE" id="PS00079">
    <property type="entry name" value="MULTICOPPER_OXIDASE1"/>
    <property type="match status" value="1"/>
</dbReference>
<dbReference type="PROSITE" id="PS00080">
    <property type="entry name" value="MULTICOPPER_OXIDASE2"/>
    <property type="match status" value="1"/>
</dbReference>
<name>MLAC1_METAN</name>
<reference key="1">
    <citation type="journal article" date="2010" name="Fungal Genet. Biol.">
        <title>A laccase exclusively expressed by Metarhizium anisopliae during isotropic growth is involved in pigmentation, tolerance to abiotic stresses and virulence.</title>
        <authorList>
            <person name="Fang W."/>
            <person name="Fernandes E.K."/>
            <person name="Roberts D.W."/>
            <person name="Bidochka M.J."/>
            <person name="St Leger R.J."/>
        </authorList>
    </citation>
    <scope>NUCLEOTIDE SEQUENCE [GENOMIC DNA]</scope>
    <scope>INDUCTION</scope>
    <scope>DISRUPTION PHENOTYPE</scope>
    <scope>FUNCTION</scope>
    <scope>PATHWAY</scope>
    <source>
        <strain>ARSEF 2575</strain>
    </source>
</reference>
<reference key="2">
    <citation type="journal article" date="2018" name="PLoS Genet.">
        <title>Duplication of a Pks gene cluster and subsequent functional diversification facilitate environmental adaptation in Metarhizium species.</title>
        <authorList>
            <person name="Zeng G."/>
            <person name="Zhang P."/>
            <person name="Zhang Q."/>
            <person name="Zhao H."/>
            <person name="Li Z."/>
            <person name="Zhang X."/>
            <person name="Wang C."/>
            <person name="Yin W.B."/>
            <person name="Fang W."/>
        </authorList>
    </citation>
    <scope>IDENTIFICATION</scope>
    <scope>FUNCTION</scope>
</reference>
<proteinExistence type="evidence at transcript level"/>
<gene>
    <name evidence="7" type="primary">Mlac1</name>
    <name evidence="8" type="synonym">Abr2</name>
</gene>
<feature type="signal peptide" evidence="3">
    <location>
        <begin position="1"/>
        <end position="20"/>
    </location>
</feature>
<feature type="chain" id="PRO_5002932445" description="Laccase 1">
    <location>
        <begin position="21"/>
        <end position="603"/>
    </location>
</feature>
<feature type="domain" description="Plastocyanin-like 1" evidence="3">
    <location>
        <begin position="66"/>
        <end position="108"/>
    </location>
</feature>
<feature type="domain" description="Plastocyanin-like 2" evidence="3">
    <location>
        <begin position="159"/>
        <end position="349"/>
    </location>
</feature>
<feature type="domain" description="Plastocyanin-like 3" evidence="3">
    <location>
        <begin position="460"/>
        <end position="588"/>
    </location>
</feature>
<feature type="binding site" evidence="2">
    <location>
        <position position="90"/>
    </location>
    <ligand>
        <name>Cu cation</name>
        <dbReference type="ChEBI" id="CHEBI:23378"/>
        <label>2</label>
    </ligand>
</feature>
<feature type="binding site" evidence="2">
    <location>
        <position position="92"/>
    </location>
    <ligand>
        <name>Cu cation</name>
        <dbReference type="ChEBI" id="CHEBI:23378"/>
        <label>3</label>
    </ligand>
</feature>
<feature type="binding site" evidence="2">
    <location>
        <position position="496"/>
    </location>
    <ligand>
        <name>Cu cation</name>
        <dbReference type="ChEBI" id="CHEBI:23378"/>
        <label>4</label>
    </ligand>
</feature>
<feature type="binding site" evidence="2">
    <location>
        <position position="499"/>
    </location>
    <ligand>
        <name>Cu cation</name>
        <dbReference type="ChEBI" id="CHEBI:23378"/>
        <label>1</label>
    </ligand>
</feature>
<feature type="binding site" evidence="2">
    <location>
        <position position="499"/>
    </location>
    <ligand>
        <name>Cu cation</name>
        <dbReference type="ChEBI" id="CHEBI:23378"/>
        <label>4</label>
    </ligand>
</feature>
<feature type="binding site" evidence="2">
    <location>
        <position position="501"/>
    </location>
    <ligand>
        <name>Cu cation</name>
        <dbReference type="ChEBI" id="CHEBI:23378"/>
        <label>3</label>
    </ligand>
</feature>
<feature type="binding site" evidence="2">
    <location>
        <position position="570"/>
    </location>
    <ligand>
        <name>Cu cation</name>
        <dbReference type="ChEBI" id="CHEBI:23378"/>
        <label>3</label>
    </ligand>
</feature>
<feature type="binding site" evidence="2">
    <location>
        <position position="571"/>
    </location>
    <ligand>
        <name>Cu cation</name>
        <dbReference type="ChEBI" id="CHEBI:23378"/>
        <label>4</label>
    </ligand>
</feature>
<feature type="binding site" evidence="2">
    <location>
        <position position="572"/>
    </location>
    <ligand>
        <name>Cu cation</name>
        <dbReference type="ChEBI" id="CHEBI:23378"/>
        <label>2</label>
    </ligand>
</feature>
<feature type="binding site" evidence="2">
    <location>
        <position position="576"/>
    </location>
    <ligand>
        <name>Cu cation</name>
        <dbReference type="ChEBI" id="CHEBI:23378"/>
        <label>4</label>
    </ligand>
</feature>
<feature type="glycosylation site" description="N-linked (GlcNAc...) asparagine" evidence="4">
    <location>
        <position position="246"/>
    </location>
</feature>
<feature type="glycosylation site" description="N-linked (GlcNAc...) asparagine" evidence="4">
    <location>
        <position position="269"/>
    </location>
</feature>
<feature type="glycosylation site" description="N-linked (GlcNAc...) asparagine" evidence="4">
    <location>
        <position position="434"/>
    </location>
</feature>
<feature type="glycosylation site" description="N-linked (GlcNAc...) asparagine" evidence="4">
    <location>
        <position position="474"/>
    </location>
</feature>
<feature type="glycosylation site" description="N-linked (GlcNAc...) asparagine" evidence="4">
    <location>
        <position position="516"/>
    </location>
</feature>